<reference key="1">
    <citation type="journal article" date="2009" name="Science">
        <title>The dynamics and time scale of ongoing genomic erosion in symbiotic bacteria.</title>
        <authorList>
            <person name="Moran N.A."/>
            <person name="McLaughlin H.J."/>
            <person name="Sorek R."/>
        </authorList>
    </citation>
    <scope>NUCLEOTIDE SEQUENCE [LARGE SCALE GENOMIC DNA]</scope>
    <source>
        <strain>Tuc7</strain>
    </source>
</reference>
<organism>
    <name type="scientific">Buchnera aphidicola subsp. Acyrthosiphon pisum (strain Tuc7)</name>
    <dbReference type="NCBI Taxonomy" id="561501"/>
    <lineage>
        <taxon>Bacteria</taxon>
        <taxon>Pseudomonadati</taxon>
        <taxon>Pseudomonadota</taxon>
        <taxon>Gammaproteobacteria</taxon>
        <taxon>Enterobacterales</taxon>
        <taxon>Erwiniaceae</taxon>
        <taxon>Buchnera</taxon>
    </lineage>
</organism>
<keyword id="KW-0963">Cytoplasm</keyword>
<keyword id="KW-0275">Fatty acid biosynthesis</keyword>
<keyword id="KW-0276">Fatty acid metabolism</keyword>
<keyword id="KW-0444">Lipid biosynthesis</keyword>
<keyword id="KW-0443">Lipid metabolism</keyword>
<keyword id="KW-0460">Magnesium</keyword>
<keyword id="KW-0479">Metal-binding</keyword>
<keyword id="KW-0808">Transferase</keyword>
<gene>
    <name evidence="1" type="primary">acpS</name>
    <name type="ordered locus">BUAPTUC7_253</name>
</gene>
<accession>B8D7F3</accession>
<name>ACPS_BUCAT</name>
<protein>
    <recommendedName>
        <fullName evidence="1">Holo-[acyl-carrier-protein] synthase</fullName>
        <shortName evidence="1">Holo-ACP synthase</shortName>
        <ecNumber evidence="1">2.7.8.7</ecNumber>
    </recommendedName>
    <alternativeName>
        <fullName evidence="1">4'-phosphopantetheinyl transferase AcpS</fullName>
    </alternativeName>
</protein>
<sequence length="126" mass="14482">MSIIGIGIDFVEILRIKNIFLKYGDKFARKILSTEEWKKYILIDDSISFLAKKFVAKEAASKALGTGINHQITFNQLEFYKNKSGKPKLRFLKHALKKSKEIQCKSIHVSISDQKLYAYALVILEN</sequence>
<dbReference type="EC" id="2.7.8.7" evidence="1"/>
<dbReference type="EMBL" id="CP001158">
    <property type="protein sequence ID" value="ACL30068.1"/>
    <property type="molecule type" value="Genomic_DNA"/>
</dbReference>
<dbReference type="RefSeq" id="WP_009874210.1">
    <property type="nucleotide sequence ID" value="NC_011834.1"/>
</dbReference>
<dbReference type="SMR" id="B8D7F3"/>
<dbReference type="KEGG" id="bau:BUAPTUC7_253"/>
<dbReference type="HOGENOM" id="CLU_089696_3_1_6"/>
<dbReference type="GO" id="GO:0005737">
    <property type="term" value="C:cytoplasm"/>
    <property type="evidence" value="ECO:0007669"/>
    <property type="project" value="UniProtKB-SubCell"/>
</dbReference>
<dbReference type="GO" id="GO:0008897">
    <property type="term" value="F:holo-[acyl-carrier-protein] synthase activity"/>
    <property type="evidence" value="ECO:0007669"/>
    <property type="project" value="UniProtKB-UniRule"/>
</dbReference>
<dbReference type="GO" id="GO:0000287">
    <property type="term" value="F:magnesium ion binding"/>
    <property type="evidence" value="ECO:0007669"/>
    <property type="project" value="UniProtKB-UniRule"/>
</dbReference>
<dbReference type="GO" id="GO:0006633">
    <property type="term" value="P:fatty acid biosynthetic process"/>
    <property type="evidence" value="ECO:0007669"/>
    <property type="project" value="UniProtKB-UniRule"/>
</dbReference>
<dbReference type="FunFam" id="3.90.470.20:FF:000001">
    <property type="entry name" value="Holo-[acyl-carrier-protein] synthase"/>
    <property type="match status" value="1"/>
</dbReference>
<dbReference type="Gene3D" id="3.90.470.20">
    <property type="entry name" value="4'-phosphopantetheinyl transferase domain"/>
    <property type="match status" value="1"/>
</dbReference>
<dbReference type="HAMAP" id="MF_00101">
    <property type="entry name" value="AcpS"/>
    <property type="match status" value="1"/>
</dbReference>
<dbReference type="InterPro" id="IPR008278">
    <property type="entry name" value="4-PPantetheinyl_Trfase_dom"/>
</dbReference>
<dbReference type="InterPro" id="IPR037143">
    <property type="entry name" value="4-PPantetheinyl_Trfase_dom_sf"/>
</dbReference>
<dbReference type="InterPro" id="IPR002582">
    <property type="entry name" value="ACPS"/>
</dbReference>
<dbReference type="InterPro" id="IPR004568">
    <property type="entry name" value="Ppantetheine-prot_Trfase_dom"/>
</dbReference>
<dbReference type="NCBIfam" id="TIGR00516">
    <property type="entry name" value="acpS"/>
    <property type="match status" value="1"/>
</dbReference>
<dbReference type="NCBIfam" id="TIGR00556">
    <property type="entry name" value="pantethn_trn"/>
    <property type="match status" value="1"/>
</dbReference>
<dbReference type="Pfam" id="PF01648">
    <property type="entry name" value="ACPS"/>
    <property type="match status" value="1"/>
</dbReference>
<dbReference type="SUPFAM" id="SSF56214">
    <property type="entry name" value="4'-phosphopantetheinyl transferase"/>
    <property type="match status" value="1"/>
</dbReference>
<proteinExistence type="inferred from homology"/>
<evidence type="ECO:0000255" key="1">
    <source>
        <dbReference type="HAMAP-Rule" id="MF_00101"/>
    </source>
</evidence>
<feature type="chain" id="PRO_1000118799" description="Holo-[acyl-carrier-protein] synthase">
    <location>
        <begin position="1"/>
        <end position="126"/>
    </location>
</feature>
<feature type="binding site" evidence="1">
    <location>
        <position position="9"/>
    </location>
    <ligand>
        <name>Mg(2+)</name>
        <dbReference type="ChEBI" id="CHEBI:18420"/>
    </ligand>
</feature>
<feature type="binding site" evidence="1">
    <location>
        <position position="58"/>
    </location>
    <ligand>
        <name>Mg(2+)</name>
        <dbReference type="ChEBI" id="CHEBI:18420"/>
    </ligand>
</feature>
<comment type="function">
    <text evidence="1">Transfers the 4'-phosphopantetheine moiety from coenzyme A to a Ser of acyl-carrier-protein.</text>
</comment>
<comment type="catalytic activity">
    <reaction evidence="1">
        <text>apo-[ACP] + CoA = holo-[ACP] + adenosine 3',5'-bisphosphate + H(+)</text>
        <dbReference type="Rhea" id="RHEA:12068"/>
        <dbReference type="Rhea" id="RHEA-COMP:9685"/>
        <dbReference type="Rhea" id="RHEA-COMP:9690"/>
        <dbReference type="ChEBI" id="CHEBI:15378"/>
        <dbReference type="ChEBI" id="CHEBI:29999"/>
        <dbReference type="ChEBI" id="CHEBI:57287"/>
        <dbReference type="ChEBI" id="CHEBI:58343"/>
        <dbReference type="ChEBI" id="CHEBI:64479"/>
        <dbReference type="EC" id="2.7.8.7"/>
    </reaction>
</comment>
<comment type="cofactor">
    <cofactor evidence="1">
        <name>Mg(2+)</name>
        <dbReference type="ChEBI" id="CHEBI:18420"/>
    </cofactor>
</comment>
<comment type="subcellular location">
    <subcellularLocation>
        <location evidence="1">Cytoplasm</location>
    </subcellularLocation>
</comment>
<comment type="similarity">
    <text evidence="1">Belongs to the P-Pant transferase superfamily. AcpS family.</text>
</comment>